<accession>Q31R18</accession>
<evidence type="ECO:0000255" key="1">
    <source>
        <dbReference type="HAMAP-Rule" id="MF_01038"/>
    </source>
</evidence>
<feature type="chain" id="PRO_1000064013" description="2,3-bisphosphoglycerate-independent phosphoglycerate mutase">
    <location>
        <begin position="1"/>
        <end position="532"/>
    </location>
</feature>
<feature type="active site" description="Phosphoserine intermediate" evidence="1">
    <location>
        <position position="65"/>
    </location>
</feature>
<feature type="binding site" evidence="1">
    <location>
        <position position="15"/>
    </location>
    <ligand>
        <name>Mn(2+)</name>
        <dbReference type="ChEBI" id="CHEBI:29035"/>
        <label>2</label>
    </ligand>
</feature>
<feature type="binding site" evidence="1">
    <location>
        <position position="65"/>
    </location>
    <ligand>
        <name>Mn(2+)</name>
        <dbReference type="ChEBI" id="CHEBI:29035"/>
        <label>2</label>
    </ligand>
</feature>
<feature type="binding site" evidence="1">
    <location>
        <position position="126"/>
    </location>
    <ligand>
        <name>substrate</name>
    </ligand>
</feature>
<feature type="binding site" evidence="1">
    <location>
        <begin position="156"/>
        <end position="157"/>
    </location>
    <ligand>
        <name>substrate</name>
    </ligand>
</feature>
<feature type="binding site" evidence="1">
    <location>
        <position position="188"/>
    </location>
    <ligand>
        <name>substrate</name>
    </ligand>
</feature>
<feature type="binding site" evidence="1">
    <location>
        <position position="194"/>
    </location>
    <ligand>
        <name>substrate</name>
    </ligand>
</feature>
<feature type="binding site" evidence="1">
    <location>
        <begin position="258"/>
        <end position="261"/>
    </location>
    <ligand>
        <name>substrate</name>
    </ligand>
</feature>
<feature type="binding site" evidence="1">
    <location>
        <position position="331"/>
    </location>
    <ligand>
        <name>substrate</name>
    </ligand>
</feature>
<feature type="binding site" evidence="1">
    <location>
        <position position="398"/>
    </location>
    <ligand>
        <name>Mn(2+)</name>
        <dbReference type="ChEBI" id="CHEBI:29035"/>
        <label>1</label>
    </ligand>
</feature>
<feature type="binding site" evidence="1">
    <location>
        <position position="402"/>
    </location>
    <ligand>
        <name>Mn(2+)</name>
        <dbReference type="ChEBI" id="CHEBI:29035"/>
        <label>1</label>
    </ligand>
</feature>
<feature type="binding site" evidence="1">
    <location>
        <position position="439"/>
    </location>
    <ligand>
        <name>Mn(2+)</name>
        <dbReference type="ChEBI" id="CHEBI:29035"/>
        <label>2</label>
    </ligand>
</feature>
<feature type="binding site" evidence="1">
    <location>
        <position position="440"/>
    </location>
    <ligand>
        <name>Mn(2+)</name>
        <dbReference type="ChEBI" id="CHEBI:29035"/>
        <label>2</label>
    </ligand>
</feature>
<feature type="binding site" evidence="1">
    <location>
        <position position="457"/>
    </location>
    <ligand>
        <name>Mn(2+)</name>
        <dbReference type="ChEBI" id="CHEBI:29035"/>
        <label>1</label>
    </ligand>
</feature>
<proteinExistence type="inferred from homology"/>
<keyword id="KW-0324">Glycolysis</keyword>
<keyword id="KW-0413">Isomerase</keyword>
<keyword id="KW-0464">Manganese</keyword>
<keyword id="KW-0479">Metal-binding</keyword>
<keyword id="KW-1185">Reference proteome</keyword>
<organism>
    <name type="scientific">Synechococcus elongatus (strain ATCC 33912 / PCC 7942 / FACHB-805)</name>
    <name type="common">Anacystis nidulans R2</name>
    <dbReference type="NCBI Taxonomy" id="1140"/>
    <lineage>
        <taxon>Bacteria</taxon>
        <taxon>Bacillati</taxon>
        <taxon>Cyanobacteriota</taxon>
        <taxon>Cyanophyceae</taxon>
        <taxon>Synechococcales</taxon>
        <taxon>Synechococcaceae</taxon>
        <taxon>Synechococcus</taxon>
    </lineage>
</organism>
<name>GPMI_SYNE7</name>
<protein>
    <recommendedName>
        <fullName evidence="1">2,3-bisphosphoglycerate-independent phosphoglycerate mutase</fullName>
        <shortName evidence="1">BPG-independent PGAM</shortName>
        <shortName evidence="1">Phosphoglyceromutase</shortName>
        <shortName evidence="1">iPGM</shortName>
        <ecNumber evidence="1">5.4.2.12</ecNumber>
    </recommendedName>
</protein>
<sequence length="532" mass="57742">MLDASISPVVLVILDGWGYRNATEGNAIRTAETPIMDALWEAYPSTLIHTSGKDVGLPDGQMGNSEVGHLNLGAGRIVPQELVRITDAVEDGSILENPALLQACSAVRQHGSKLHLIGLCSDGGVHAHLDHLGGLLKLAAAQGIQDVYIHAITDGRDTNPTEGVNCITKIERLIATAGVGQIVTICGRYFAMDRDRRWDRVRKAYELLTIDGEGCGQTATEVLQETYAKGVSDEFVEPTRLAPGAIAPGDGVIFFNFRPDRARQLTYAFVEAEFEGFERDLIQPLTFVTFTQYDANLNVPVAFEPQNLTNILGEVVANHGLRQFRTAETEKYPHVTYFFNGGIEEPFPGEDRELIPSPMVATYDRAPKMSAQAVTDAAIAAIDKGIYSLVVINYANPDMVGHTGKMGATVEAIETVDRCLGRLVSAINRAGGTALITADHGNAEYMWDENGEPWTAHTTNLVPFIVVEGERRKLPGFGTEIPLREDGRLSDIAPTILQLLGLPQPVEMTGRSMIEPAAYEVKQGRTPVKVGV</sequence>
<reference key="1">
    <citation type="submission" date="2005-08" db="EMBL/GenBank/DDBJ databases">
        <title>Complete sequence of chromosome 1 of Synechococcus elongatus PCC 7942.</title>
        <authorList>
            <consortium name="US DOE Joint Genome Institute"/>
            <person name="Copeland A."/>
            <person name="Lucas S."/>
            <person name="Lapidus A."/>
            <person name="Barry K."/>
            <person name="Detter J.C."/>
            <person name="Glavina T."/>
            <person name="Hammon N."/>
            <person name="Israni S."/>
            <person name="Pitluck S."/>
            <person name="Schmutz J."/>
            <person name="Larimer F."/>
            <person name="Land M."/>
            <person name="Kyrpides N."/>
            <person name="Lykidis A."/>
            <person name="Golden S."/>
            <person name="Richardson P."/>
        </authorList>
    </citation>
    <scope>NUCLEOTIDE SEQUENCE [LARGE SCALE GENOMIC DNA]</scope>
    <source>
        <strain>ATCC 33912 / PCC 7942 / FACHB-805</strain>
    </source>
</reference>
<dbReference type="EC" id="5.4.2.12" evidence="1"/>
<dbReference type="EMBL" id="CP000100">
    <property type="protein sequence ID" value="ABB56501.1"/>
    <property type="molecule type" value="Genomic_DNA"/>
</dbReference>
<dbReference type="RefSeq" id="WP_011243361.1">
    <property type="nucleotide sequence ID" value="NZ_JACJTX010000002.1"/>
</dbReference>
<dbReference type="SMR" id="Q31R18"/>
<dbReference type="STRING" id="1140.Synpcc7942_0469"/>
<dbReference type="PaxDb" id="1140-Synpcc7942_0469"/>
<dbReference type="GeneID" id="72429292"/>
<dbReference type="KEGG" id="syf:Synpcc7942_0469"/>
<dbReference type="eggNOG" id="COG0696">
    <property type="taxonomic scope" value="Bacteria"/>
</dbReference>
<dbReference type="HOGENOM" id="CLU_026099_2_0_3"/>
<dbReference type="OrthoDB" id="9800863at2"/>
<dbReference type="BioCyc" id="SYNEL:SYNPCC7942_0469-MONOMER"/>
<dbReference type="UniPathway" id="UPA00109">
    <property type="reaction ID" value="UER00186"/>
</dbReference>
<dbReference type="Proteomes" id="UP000889800">
    <property type="component" value="Chromosome"/>
</dbReference>
<dbReference type="GO" id="GO:0005829">
    <property type="term" value="C:cytosol"/>
    <property type="evidence" value="ECO:0007669"/>
    <property type="project" value="TreeGrafter"/>
</dbReference>
<dbReference type="GO" id="GO:0030145">
    <property type="term" value="F:manganese ion binding"/>
    <property type="evidence" value="ECO:0007669"/>
    <property type="project" value="UniProtKB-UniRule"/>
</dbReference>
<dbReference type="GO" id="GO:0004619">
    <property type="term" value="F:phosphoglycerate mutase activity"/>
    <property type="evidence" value="ECO:0007669"/>
    <property type="project" value="UniProtKB-EC"/>
</dbReference>
<dbReference type="GO" id="GO:0006007">
    <property type="term" value="P:glucose catabolic process"/>
    <property type="evidence" value="ECO:0007669"/>
    <property type="project" value="InterPro"/>
</dbReference>
<dbReference type="GO" id="GO:0006096">
    <property type="term" value="P:glycolytic process"/>
    <property type="evidence" value="ECO:0007669"/>
    <property type="project" value="UniProtKB-UniRule"/>
</dbReference>
<dbReference type="CDD" id="cd16010">
    <property type="entry name" value="iPGM"/>
    <property type="match status" value="1"/>
</dbReference>
<dbReference type="FunFam" id="3.40.1450.10:FF:000002">
    <property type="entry name" value="2,3-bisphosphoglycerate-independent phosphoglycerate mutase"/>
    <property type="match status" value="1"/>
</dbReference>
<dbReference type="Gene3D" id="3.40.720.10">
    <property type="entry name" value="Alkaline Phosphatase, subunit A"/>
    <property type="match status" value="1"/>
</dbReference>
<dbReference type="Gene3D" id="3.40.1450.10">
    <property type="entry name" value="BPG-independent phosphoglycerate mutase, domain B"/>
    <property type="match status" value="1"/>
</dbReference>
<dbReference type="HAMAP" id="MF_01038">
    <property type="entry name" value="GpmI"/>
    <property type="match status" value="1"/>
</dbReference>
<dbReference type="InterPro" id="IPR017850">
    <property type="entry name" value="Alkaline_phosphatase_core_sf"/>
</dbReference>
<dbReference type="InterPro" id="IPR011258">
    <property type="entry name" value="BPG-indep_PGM_N"/>
</dbReference>
<dbReference type="InterPro" id="IPR006124">
    <property type="entry name" value="Metalloenzyme"/>
</dbReference>
<dbReference type="InterPro" id="IPR036646">
    <property type="entry name" value="PGAM_B_sf"/>
</dbReference>
<dbReference type="InterPro" id="IPR005995">
    <property type="entry name" value="Pgm_bpd_ind"/>
</dbReference>
<dbReference type="NCBIfam" id="TIGR01307">
    <property type="entry name" value="pgm_bpd_ind"/>
    <property type="match status" value="1"/>
</dbReference>
<dbReference type="PANTHER" id="PTHR31637">
    <property type="entry name" value="2,3-BISPHOSPHOGLYCERATE-INDEPENDENT PHOSPHOGLYCERATE MUTASE"/>
    <property type="match status" value="1"/>
</dbReference>
<dbReference type="PANTHER" id="PTHR31637:SF0">
    <property type="entry name" value="2,3-BISPHOSPHOGLYCERATE-INDEPENDENT PHOSPHOGLYCERATE MUTASE"/>
    <property type="match status" value="1"/>
</dbReference>
<dbReference type="Pfam" id="PF06415">
    <property type="entry name" value="iPGM_N"/>
    <property type="match status" value="1"/>
</dbReference>
<dbReference type="Pfam" id="PF01676">
    <property type="entry name" value="Metalloenzyme"/>
    <property type="match status" value="1"/>
</dbReference>
<dbReference type="PIRSF" id="PIRSF001492">
    <property type="entry name" value="IPGAM"/>
    <property type="match status" value="1"/>
</dbReference>
<dbReference type="SUPFAM" id="SSF64158">
    <property type="entry name" value="2,3-Bisphosphoglycerate-independent phosphoglycerate mutase, substrate-binding domain"/>
    <property type="match status" value="1"/>
</dbReference>
<dbReference type="SUPFAM" id="SSF53649">
    <property type="entry name" value="Alkaline phosphatase-like"/>
    <property type="match status" value="1"/>
</dbReference>
<comment type="function">
    <text evidence="1">Catalyzes the interconversion of 2-phosphoglycerate and 3-phosphoglycerate.</text>
</comment>
<comment type="catalytic activity">
    <reaction evidence="1">
        <text>(2R)-2-phosphoglycerate = (2R)-3-phosphoglycerate</text>
        <dbReference type="Rhea" id="RHEA:15901"/>
        <dbReference type="ChEBI" id="CHEBI:58272"/>
        <dbReference type="ChEBI" id="CHEBI:58289"/>
        <dbReference type="EC" id="5.4.2.12"/>
    </reaction>
</comment>
<comment type="cofactor">
    <cofactor evidence="1">
        <name>Mn(2+)</name>
        <dbReference type="ChEBI" id="CHEBI:29035"/>
    </cofactor>
    <text evidence="1">Binds 2 manganese ions per subunit.</text>
</comment>
<comment type="pathway">
    <text evidence="1">Carbohydrate degradation; glycolysis; pyruvate from D-glyceraldehyde 3-phosphate: step 3/5.</text>
</comment>
<comment type="subunit">
    <text evidence="1">Monomer.</text>
</comment>
<comment type="similarity">
    <text evidence="1">Belongs to the BPG-independent phosphoglycerate mutase family.</text>
</comment>
<gene>
    <name evidence="1" type="primary">gpmI</name>
    <name type="ordered locus">Synpcc7942_0469</name>
</gene>